<keyword id="KW-1185">Reference proteome</keyword>
<dbReference type="EMBL" id="AE006468">
    <property type="protein sequence ID" value="AAL22143.1"/>
    <property type="status" value="ALT_INIT"/>
    <property type="molecule type" value="Genomic_DNA"/>
</dbReference>
<dbReference type="RefSeq" id="NP_462184.3">
    <property type="nucleotide sequence ID" value="NC_003197.2"/>
</dbReference>
<dbReference type="SMR" id="P67349"/>
<dbReference type="STRING" id="99287.STM3271"/>
<dbReference type="PaxDb" id="99287-STM3271"/>
<dbReference type="GeneID" id="1254794"/>
<dbReference type="KEGG" id="stm:STM3271"/>
<dbReference type="PATRIC" id="fig|99287.12.peg.3470"/>
<dbReference type="HOGENOM" id="CLU_135650_0_1_6"/>
<dbReference type="PhylomeDB" id="P67349"/>
<dbReference type="Proteomes" id="UP000001014">
    <property type="component" value="Chromosome"/>
</dbReference>
<dbReference type="CDD" id="cd10456">
    <property type="entry name" value="GIY-YIG_UPF0213"/>
    <property type="match status" value="1"/>
</dbReference>
<dbReference type="Gene3D" id="3.40.1440.10">
    <property type="entry name" value="GIY-YIG endonuclease"/>
    <property type="match status" value="1"/>
</dbReference>
<dbReference type="HAMAP" id="MF_01029">
    <property type="entry name" value="UPF0213"/>
    <property type="match status" value="1"/>
</dbReference>
<dbReference type="InterPro" id="IPR000305">
    <property type="entry name" value="GIY-YIG_endonuc"/>
</dbReference>
<dbReference type="InterPro" id="IPR035901">
    <property type="entry name" value="GIY-YIG_endonuc_sf"/>
</dbReference>
<dbReference type="InterPro" id="IPR050190">
    <property type="entry name" value="UPF0213_domain"/>
</dbReference>
<dbReference type="InterPro" id="IPR022992">
    <property type="entry name" value="UPF0213_GIY-YIG_endonuc"/>
</dbReference>
<dbReference type="PANTHER" id="PTHR34477">
    <property type="entry name" value="UPF0213 PROTEIN YHBQ"/>
    <property type="match status" value="1"/>
</dbReference>
<dbReference type="PANTHER" id="PTHR34477:SF1">
    <property type="entry name" value="UPF0213 PROTEIN YHBQ"/>
    <property type="match status" value="1"/>
</dbReference>
<dbReference type="Pfam" id="PF01541">
    <property type="entry name" value="GIY-YIG"/>
    <property type="match status" value="1"/>
</dbReference>
<dbReference type="SMART" id="SM00465">
    <property type="entry name" value="GIYc"/>
    <property type="match status" value="1"/>
</dbReference>
<dbReference type="SUPFAM" id="SSF82771">
    <property type="entry name" value="GIY-YIG endonuclease"/>
    <property type="match status" value="1"/>
</dbReference>
<dbReference type="PROSITE" id="PS50164">
    <property type="entry name" value="GIY_YIG"/>
    <property type="match status" value="1"/>
</dbReference>
<protein>
    <recommendedName>
        <fullName evidence="1">UPF0213 protein YhbQ</fullName>
    </recommendedName>
</protein>
<gene>
    <name evidence="1" type="primary">yhbQ</name>
    <name type="ordered locus">STM3271</name>
</gene>
<organism>
    <name type="scientific">Salmonella typhimurium (strain LT2 / SGSC1412 / ATCC 700720)</name>
    <dbReference type="NCBI Taxonomy" id="99287"/>
    <lineage>
        <taxon>Bacteria</taxon>
        <taxon>Pseudomonadati</taxon>
        <taxon>Pseudomonadota</taxon>
        <taxon>Gammaproteobacteria</taxon>
        <taxon>Enterobacterales</taxon>
        <taxon>Enterobacteriaceae</taxon>
        <taxon>Salmonella</taxon>
    </lineage>
</organism>
<proteinExistence type="inferred from homology"/>
<sequence length="100" mass="11454">MTPWYLYLIRTADNALYTGITTDVARRYRQHQTGKGAKALRGKGELTLAFAAQVGDRSLALRIEYRIKQLTKRQKERLVTEREAFEALLSSLQTPVLKND</sequence>
<feature type="chain" id="PRO_0000161377" description="UPF0213 protein YhbQ">
    <location>
        <begin position="1"/>
        <end position="100"/>
    </location>
</feature>
<feature type="domain" description="GIY-YIG" evidence="1">
    <location>
        <begin position="2"/>
        <end position="77"/>
    </location>
</feature>
<comment type="similarity">
    <text evidence="1">Belongs to the UPF0213 family.</text>
</comment>
<comment type="sequence caution" evidence="2">
    <conflict type="erroneous initiation">
        <sequence resource="EMBL-CDS" id="AAL22143"/>
    </conflict>
</comment>
<evidence type="ECO:0000255" key="1">
    <source>
        <dbReference type="HAMAP-Rule" id="MF_01029"/>
    </source>
</evidence>
<evidence type="ECO:0000305" key="2"/>
<accession>P67349</accession>
<accession>Q8XGW2</accession>
<reference key="1">
    <citation type="journal article" date="2001" name="Nature">
        <title>Complete genome sequence of Salmonella enterica serovar Typhimurium LT2.</title>
        <authorList>
            <person name="McClelland M."/>
            <person name="Sanderson K.E."/>
            <person name="Spieth J."/>
            <person name="Clifton S.W."/>
            <person name="Latreille P."/>
            <person name="Courtney L."/>
            <person name="Porwollik S."/>
            <person name="Ali J."/>
            <person name="Dante M."/>
            <person name="Du F."/>
            <person name="Hou S."/>
            <person name="Layman D."/>
            <person name="Leonard S."/>
            <person name="Nguyen C."/>
            <person name="Scott K."/>
            <person name="Holmes A."/>
            <person name="Grewal N."/>
            <person name="Mulvaney E."/>
            <person name="Ryan E."/>
            <person name="Sun H."/>
            <person name="Florea L."/>
            <person name="Miller W."/>
            <person name="Stoneking T."/>
            <person name="Nhan M."/>
            <person name="Waterston R."/>
            <person name="Wilson R.K."/>
        </authorList>
    </citation>
    <scope>NUCLEOTIDE SEQUENCE [LARGE SCALE GENOMIC DNA]</scope>
    <source>
        <strain>LT2 / SGSC1412 / ATCC 700720</strain>
    </source>
</reference>
<name>YHBQ_SALTY</name>